<accession>P50270</accession>
<accession>Q94PM8</accession>
<accession>Q9ME70</accession>
<feature type="chain" id="PRO_0000195525" description="ATP synthase protein 8">
    <location>
        <begin position="1"/>
        <end position="53"/>
    </location>
</feature>
<feature type="transmembrane region" description="Helical" evidence="2">
    <location>
        <begin position="4"/>
        <end position="24"/>
    </location>
</feature>
<feature type="sequence variant" description="In strain: HW00, HW09, NC37, NC48, TT00 and TT01.">
    <original>I</original>
    <variation>M</variation>
    <location>
        <position position="26"/>
    </location>
</feature>
<feature type="sequence variant" description="In strain: HW00, HW09, NC37, NC48, TT00 and TT01.">
    <original>M</original>
    <variation>I</variation>
    <location>
        <position position="32"/>
    </location>
</feature>
<feature type="sequence variant" description="In strain: AU023, C167, DSR, DSW, KY007, KY201, KY215, MD106, MD225, RU35 and SC00.">
    <original>N</original>
    <variation>D</variation>
    <location>
        <position position="34"/>
    </location>
</feature>
<evidence type="ECO:0000250" key="1"/>
<evidence type="ECO:0000255" key="2"/>
<evidence type="ECO:0000305" key="3"/>
<dbReference type="EMBL" id="S64977">
    <property type="protein sequence ID" value="AAD13957.1"/>
    <property type="molecule type" value="Genomic_DNA"/>
</dbReference>
<dbReference type="EMBL" id="AF200833">
    <property type="protein sequence ID" value="AAF77292.1"/>
    <property type="molecule type" value="Genomic_DNA"/>
</dbReference>
<dbReference type="EMBL" id="AF200834">
    <property type="protein sequence ID" value="AAF77306.1"/>
    <property type="molecule type" value="Genomic_DNA"/>
</dbReference>
<dbReference type="EMBL" id="AF200835">
    <property type="protein sequence ID" value="AAF77319.1"/>
    <property type="molecule type" value="Genomic_DNA"/>
</dbReference>
<dbReference type="EMBL" id="AF200836">
    <property type="protein sequence ID" value="AAF77332.1"/>
    <property type="molecule type" value="Genomic_DNA"/>
</dbReference>
<dbReference type="EMBL" id="AF200837">
    <property type="protein sequence ID" value="AAF77345.1"/>
    <property type="molecule type" value="Genomic_DNA"/>
</dbReference>
<dbReference type="EMBL" id="AF200838">
    <property type="protein sequence ID" value="AAF77358.1"/>
    <property type="molecule type" value="Genomic_DNA"/>
</dbReference>
<dbReference type="EMBL" id="AF200839">
    <property type="protein sequence ID" value="AAF77372.1"/>
    <property type="molecule type" value="Genomic_DNA"/>
</dbReference>
<dbReference type="EMBL" id="AF200840">
    <property type="protein sequence ID" value="AAF77384.1"/>
    <property type="molecule type" value="Genomic_DNA"/>
</dbReference>
<dbReference type="EMBL" id="AF200841">
    <property type="protein sequence ID" value="AAF77397.1"/>
    <property type="molecule type" value="Genomic_DNA"/>
</dbReference>
<dbReference type="EMBL" id="AF200842">
    <property type="protein sequence ID" value="AAF77409.1"/>
    <property type="molecule type" value="Genomic_DNA"/>
</dbReference>
<dbReference type="EMBL" id="AF200843">
    <property type="protein sequence ID" value="AAF77423.1"/>
    <property type="molecule type" value="Genomic_DNA"/>
</dbReference>
<dbReference type="EMBL" id="AF200844">
    <property type="protein sequence ID" value="AAF77436.1"/>
    <property type="molecule type" value="Genomic_DNA"/>
</dbReference>
<dbReference type="EMBL" id="AF200845">
    <property type="protein sequence ID" value="AAF77449.1"/>
    <property type="molecule type" value="Genomic_DNA"/>
</dbReference>
<dbReference type="EMBL" id="AF200846">
    <property type="protein sequence ID" value="AAF77462.1"/>
    <property type="molecule type" value="Genomic_DNA"/>
</dbReference>
<dbReference type="EMBL" id="AF200847">
    <property type="protein sequence ID" value="AAF77475.1"/>
    <property type="molecule type" value="Genomic_DNA"/>
</dbReference>
<dbReference type="EMBL" id="AF200848">
    <property type="protein sequence ID" value="AAF77488.1"/>
    <property type="molecule type" value="Genomic_DNA"/>
</dbReference>
<dbReference type="EMBL" id="AF200849">
    <property type="protein sequence ID" value="AAF77502.1"/>
    <property type="molecule type" value="Genomic_DNA"/>
</dbReference>
<dbReference type="EMBL" id="AF200850">
    <property type="protein sequence ID" value="AAF77514.1"/>
    <property type="molecule type" value="Genomic_DNA"/>
</dbReference>
<dbReference type="EMBL" id="AF200851">
    <property type="protein sequence ID" value="AAF77528.1"/>
    <property type="molecule type" value="Genomic_DNA"/>
</dbReference>
<dbReference type="EMBL" id="AF200852">
    <property type="protein sequence ID" value="AAF77540.1"/>
    <property type="molecule type" value="Genomic_DNA"/>
</dbReference>
<dbReference type="EMBL" id="AF200853">
    <property type="protein sequence ID" value="AAF77553.1"/>
    <property type="molecule type" value="Genomic_DNA"/>
</dbReference>
<dbReference type="EMBL" id="AF200854">
    <property type="protein sequence ID" value="AAF77566.1"/>
    <property type="molecule type" value="Genomic_DNA"/>
</dbReference>
<dbReference type="EMBL" id="AY518670">
    <property type="protein sequence ID" value="AAR91388.1"/>
    <property type="molecule type" value="Genomic_DNA"/>
</dbReference>
<dbReference type="EMBL" id="AY518671">
    <property type="protein sequence ID" value="AAR91404.1"/>
    <property type="molecule type" value="Genomic_DNA"/>
</dbReference>
<dbReference type="EMBL" id="AY518672">
    <property type="protein sequence ID" value="AAR91417.1"/>
    <property type="molecule type" value="Genomic_DNA"/>
</dbReference>
<dbReference type="EMBL" id="AY518673">
    <property type="protein sequence ID" value="AAR91430.1"/>
    <property type="molecule type" value="Genomic_DNA"/>
</dbReference>
<dbReference type="EMBL" id="AY518674">
    <property type="protein sequence ID" value="AAR91443.1"/>
    <property type="molecule type" value="Genomic_DNA"/>
</dbReference>
<dbReference type="RefSeq" id="NP_982325.1">
    <property type="nucleotide sequence ID" value="NC_005781.1"/>
</dbReference>
<dbReference type="SMR" id="P50270"/>
<dbReference type="STRING" id="7240.P50270"/>
<dbReference type="GeneID" id="2760958"/>
<dbReference type="KEGG" id="dsi:ATP8"/>
<dbReference type="CTD" id="4509"/>
<dbReference type="Proteomes" id="UP000000304">
    <property type="component" value="Mitochondrion"/>
</dbReference>
<dbReference type="GO" id="GO:0031966">
    <property type="term" value="C:mitochondrial membrane"/>
    <property type="evidence" value="ECO:0007669"/>
    <property type="project" value="UniProtKB-SubCell"/>
</dbReference>
<dbReference type="GO" id="GO:0045259">
    <property type="term" value="C:proton-transporting ATP synthase complex"/>
    <property type="evidence" value="ECO:0007669"/>
    <property type="project" value="UniProtKB-KW"/>
</dbReference>
<dbReference type="GO" id="GO:0015078">
    <property type="term" value="F:proton transmembrane transporter activity"/>
    <property type="evidence" value="ECO:0007669"/>
    <property type="project" value="InterPro"/>
</dbReference>
<dbReference type="GO" id="GO:0015986">
    <property type="term" value="P:proton motive force-driven ATP synthesis"/>
    <property type="evidence" value="ECO:0007669"/>
    <property type="project" value="InterPro"/>
</dbReference>
<dbReference type="InterPro" id="IPR001421">
    <property type="entry name" value="ATP8_metazoa"/>
</dbReference>
<dbReference type="Pfam" id="PF00895">
    <property type="entry name" value="ATP-synt_8"/>
    <property type="match status" value="1"/>
</dbReference>
<gene>
    <name type="primary">mt:ATPase8</name>
    <name type="synonym">ATP8</name>
    <name type="synonym">ATPase8</name>
    <name type="synonym">Mtatp8</name>
</gene>
<comment type="function">
    <text evidence="1">Mitochondrial membrane ATP synthase (F(1)F(0) ATP synthase or Complex V) produces ATP from ADP in the presence of a proton gradient across the membrane which is generated by electron transport complexes of the respiratory chain. F-type ATPases consist of two structural domains, F(1) - containing the extramembraneous catalytic core and F(0) - containing the membrane proton channel, linked together by a central stalk and a peripheral stalk. During catalysis, ATP synthesis in the catalytic domain of F(1) is coupled via a rotary mechanism of the central stalk subunits to proton translocation. Part of the complex F(0) domain. Minor subunit located with subunit a in the membrane (By similarity).</text>
</comment>
<comment type="subunit">
    <text evidence="1">F-type ATPases have 2 components, CF(1) - the catalytic core - and CF(0) - the membrane proton channel.</text>
</comment>
<comment type="subcellular location">
    <subcellularLocation>
        <location>Mitochondrion membrane</location>
        <topology>Single-pass membrane protein</topology>
    </subcellularLocation>
</comment>
<comment type="similarity">
    <text evidence="3">Belongs to the ATPase protein 8 family.</text>
</comment>
<protein>
    <recommendedName>
        <fullName>ATP synthase protein 8</fullName>
    </recommendedName>
    <alternativeName>
        <fullName>A6L</fullName>
    </alternativeName>
    <alternativeName>
        <fullName>F-ATPase subunit 8</fullName>
    </alternativeName>
</protein>
<organism>
    <name type="scientific">Drosophila simulans</name>
    <name type="common">Fruit fly</name>
    <dbReference type="NCBI Taxonomy" id="7240"/>
    <lineage>
        <taxon>Eukaryota</taxon>
        <taxon>Metazoa</taxon>
        <taxon>Ecdysozoa</taxon>
        <taxon>Arthropoda</taxon>
        <taxon>Hexapoda</taxon>
        <taxon>Insecta</taxon>
        <taxon>Pterygota</taxon>
        <taxon>Neoptera</taxon>
        <taxon>Endopterygota</taxon>
        <taxon>Diptera</taxon>
        <taxon>Brachycera</taxon>
        <taxon>Muscomorpha</taxon>
        <taxon>Ephydroidea</taxon>
        <taxon>Drosophilidae</taxon>
        <taxon>Drosophila</taxon>
        <taxon>Sophophora</taxon>
    </lineage>
</organism>
<sequence length="53" mass="6365">MPQMAPISWLLLFIIFSITFILFCSINYYSYMPNSPKSNELKNINLNSMNWKW</sequence>
<reference key="1">
    <citation type="journal article" date="1993" name="Genet. Res.">
        <title>Evolution of the mitochondrial ATPase 6 gene in Drosophila: unusually high level of polymorphism in D. melanogaster.</title>
        <authorList>
            <person name="Kaneko M."/>
            <person name="Satta Y."/>
            <person name="Matsuura E.T."/>
            <person name="Chigusa S.I."/>
        </authorList>
    </citation>
    <scope>NUCLEOTIDE SEQUENCE [GENOMIC DNA]</scope>
</reference>
<reference key="2">
    <citation type="journal article" date="2004" name="Mol. Biol. Evol.">
        <title>Sequential evolution of a symbiont inferred from the host: Wolbachia and Drosophila simulans.</title>
        <authorList>
            <person name="Ballard J.W.O."/>
        </authorList>
    </citation>
    <scope>NUCLEOTIDE SEQUENCE [GENOMIC DNA]</scope>
    <source>
        <strain>AU023</strain>
        <strain>KY007</strain>
        <strain>KY045</strain>
        <strain>KY201</strain>
        <strain>KY215</strain>
    </source>
</reference>
<reference key="3">
    <citation type="journal article" date="2000" name="J. Mol. Evol.">
        <title>Comparative genomics of mitochondrial DNA in Drosophila simulans.</title>
        <authorList>
            <person name="Ballard J.W."/>
        </authorList>
    </citation>
    <scope>NUCLEOTIDE SEQUENCE [LARGE SCALE GENOMIC DNA]</scope>
    <source>
        <strain>C167</strain>
        <strain>DSR</strain>
        <strain>DSW</strain>
        <strain>HW00</strain>
        <strain>HW09</strain>
        <strain>MD106</strain>
        <strain>MD111</strain>
        <strain>MD112</strain>
        <strain>MD199</strain>
        <strain>MD221</strain>
        <strain>MD225</strain>
        <strain>MDW86</strain>
        <strain>NC37</strain>
        <strain>NC48</strain>
        <strain>RU00</strain>
        <strain>RU01</strain>
        <strain>RU07</strain>
        <strain>RU259</strain>
        <strain>RU35</strain>
        <strain>SC00</strain>
        <strain>TT00</strain>
        <strain>TT01</strain>
    </source>
</reference>
<geneLocation type="mitochondrion"/>
<keyword id="KW-0066">ATP synthesis</keyword>
<keyword id="KW-0138">CF(0)</keyword>
<keyword id="KW-0375">Hydrogen ion transport</keyword>
<keyword id="KW-0406">Ion transport</keyword>
<keyword id="KW-0472">Membrane</keyword>
<keyword id="KW-0496">Mitochondrion</keyword>
<keyword id="KW-1185">Reference proteome</keyword>
<keyword id="KW-0812">Transmembrane</keyword>
<keyword id="KW-1133">Transmembrane helix</keyword>
<keyword id="KW-0813">Transport</keyword>
<proteinExistence type="inferred from homology"/>
<name>ATP8_DROSI</name>